<organism>
    <name type="scientific">Arabidopsis thaliana</name>
    <name type="common">Mouse-ear cress</name>
    <dbReference type="NCBI Taxonomy" id="3702"/>
    <lineage>
        <taxon>Eukaryota</taxon>
        <taxon>Viridiplantae</taxon>
        <taxon>Streptophyta</taxon>
        <taxon>Embryophyta</taxon>
        <taxon>Tracheophyta</taxon>
        <taxon>Spermatophyta</taxon>
        <taxon>Magnoliopsida</taxon>
        <taxon>eudicotyledons</taxon>
        <taxon>Gunneridae</taxon>
        <taxon>Pentapetalae</taxon>
        <taxon>rosids</taxon>
        <taxon>malvids</taxon>
        <taxon>Brassicales</taxon>
        <taxon>Brassicaceae</taxon>
        <taxon>Camelineae</taxon>
        <taxon>Arabidopsis</taxon>
    </lineage>
</organism>
<gene>
    <name type="primary">DOF1.3</name>
    <name type="ordered locus">At1g26790</name>
    <name type="ORF">T24P13.17</name>
</gene>
<protein>
    <recommendedName>
        <fullName>Dof zinc finger protein DOF1.3</fullName>
        <shortName>AtDOF1.3</shortName>
    </recommendedName>
</protein>
<evidence type="ECO:0000250" key="1"/>
<evidence type="ECO:0000255" key="2">
    <source>
        <dbReference type="PROSITE-ProRule" id="PRU00071"/>
    </source>
</evidence>
<evidence type="ECO:0000256" key="3">
    <source>
        <dbReference type="SAM" id="MobiDB-lite"/>
    </source>
</evidence>
<evidence type="ECO:0000305" key="4"/>
<dbReference type="EMBL" id="AC006535">
    <property type="protein sequence ID" value="AAF87041.1"/>
    <property type="molecule type" value="Genomic_DNA"/>
</dbReference>
<dbReference type="EMBL" id="CP002684">
    <property type="status" value="NOT_ANNOTATED_CDS"/>
    <property type="molecule type" value="Genomic_DNA"/>
</dbReference>
<dbReference type="FunCoup" id="Q9LQX4">
    <property type="interactions" value="2"/>
</dbReference>
<dbReference type="STRING" id="3702.Q9LQX4"/>
<dbReference type="PaxDb" id="3702-AT1G26790.1"/>
<dbReference type="PeptideAtlas" id="Q9LQX4"/>
<dbReference type="ProteomicsDB" id="222101"/>
<dbReference type="Araport" id="AT1G26790"/>
<dbReference type="TAIR" id="AT1G26790"/>
<dbReference type="eggNOG" id="ENOG502QSI8">
    <property type="taxonomic scope" value="Eukaryota"/>
</dbReference>
<dbReference type="HOGENOM" id="CLU_030533_1_1_1"/>
<dbReference type="InParanoid" id="Q9LQX4"/>
<dbReference type="PhylomeDB" id="Q9LQX4"/>
<dbReference type="PRO" id="PR:Q9LQX4"/>
<dbReference type="Proteomes" id="UP000006548">
    <property type="component" value="Chromosome 1"/>
</dbReference>
<dbReference type="ExpressionAtlas" id="Q9LQX4">
    <property type="expression patterns" value="baseline and differential"/>
</dbReference>
<dbReference type="GO" id="GO:0005634">
    <property type="term" value="C:nucleus"/>
    <property type="evidence" value="ECO:0007669"/>
    <property type="project" value="UniProtKB-SubCell"/>
</dbReference>
<dbReference type="GO" id="GO:0003677">
    <property type="term" value="F:DNA binding"/>
    <property type="evidence" value="ECO:0000318"/>
    <property type="project" value="GO_Central"/>
</dbReference>
<dbReference type="GO" id="GO:0003700">
    <property type="term" value="F:DNA-binding transcription factor activity"/>
    <property type="evidence" value="ECO:0000318"/>
    <property type="project" value="GO_Central"/>
</dbReference>
<dbReference type="GO" id="GO:0008270">
    <property type="term" value="F:zinc ion binding"/>
    <property type="evidence" value="ECO:0007669"/>
    <property type="project" value="UniProtKB-KW"/>
</dbReference>
<dbReference type="InterPro" id="IPR045174">
    <property type="entry name" value="Dof"/>
</dbReference>
<dbReference type="InterPro" id="IPR003851">
    <property type="entry name" value="Znf_Dof"/>
</dbReference>
<dbReference type="PANTHER" id="PTHR31089">
    <property type="entry name" value="CYCLIC DOF FACTOR 2"/>
    <property type="match status" value="1"/>
</dbReference>
<dbReference type="PANTHER" id="PTHR31089:SF50">
    <property type="entry name" value="DOF ZINC FINGER PROTEIN DOF1.3"/>
    <property type="match status" value="1"/>
</dbReference>
<dbReference type="Pfam" id="PF02701">
    <property type="entry name" value="Zn_ribbon_Dof"/>
    <property type="match status" value="1"/>
</dbReference>
<dbReference type="PROSITE" id="PS01361">
    <property type="entry name" value="ZF_DOF_1"/>
    <property type="match status" value="1"/>
</dbReference>
<dbReference type="PROSITE" id="PS50884">
    <property type="entry name" value="ZF_DOF_2"/>
    <property type="match status" value="1"/>
</dbReference>
<comment type="function">
    <text evidence="1">Transcription factor that binds specifically to a 5'-AA[AG]G-3' consensus core sequence.</text>
</comment>
<comment type="subcellular location">
    <subcellularLocation>
        <location evidence="4">Nucleus</location>
    </subcellularLocation>
</comment>
<keyword id="KW-0238">DNA-binding</keyword>
<keyword id="KW-0479">Metal-binding</keyword>
<keyword id="KW-0539">Nucleus</keyword>
<keyword id="KW-1185">Reference proteome</keyword>
<keyword id="KW-0804">Transcription</keyword>
<keyword id="KW-0805">Transcription regulation</keyword>
<keyword id="KW-0862">Zinc</keyword>
<keyword id="KW-0863">Zinc-finger</keyword>
<name>DOF13_ARATH</name>
<sequence length="366" mass="41402">MSQVRDTPVKLFGWTITPVSHDPYSSSSHVLPDSSSSSSSSSLSLRPHMMNNQSVTDNTSLKLSSNLNNESKETSENSDDQHSEITTITSEEEKTTELKKPDKILPCPRCNSADTKFCYYNNYNVNQPRHFCRKCQRYWTAGGSMRIVPVGSGRRKNKGWVSSDQYLHITSEDTDNYNSSSTKILSFESSDSLVTERPKHQSNEVKINAEPVSQEPNNFQGLLPPQASPVSPPWPYQYPPNPSFYHMPVYWGCAIPVWSTLDTSTCLGKRTRDETSHETVKESKNAFERTSLLLESQSIKNETSMATNNHVWYPVPMTREKTQEFSFFSNGAETKSSNNRFVPETYLNLQANPAAMARSMNFRESI</sequence>
<reference key="1">
    <citation type="journal article" date="2000" name="Nature">
        <title>Sequence and analysis of chromosome 1 of the plant Arabidopsis thaliana.</title>
        <authorList>
            <person name="Theologis A."/>
            <person name="Ecker J.R."/>
            <person name="Palm C.J."/>
            <person name="Federspiel N.A."/>
            <person name="Kaul S."/>
            <person name="White O."/>
            <person name="Alonso J."/>
            <person name="Altafi H."/>
            <person name="Araujo R."/>
            <person name="Bowman C.L."/>
            <person name="Brooks S.Y."/>
            <person name="Buehler E."/>
            <person name="Chan A."/>
            <person name="Chao Q."/>
            <person name="Chen H."/>
            <person name="Cheuk R.F."/>
            <person name="Chin C.W."/>
            <person name="Chung M.K."/>
            <person name="Conn L."/>
            <person name="Conway A.B."/>
            <person name="Conway A.R."/>
            <person name="Creasy T.H."/>
            <person name="Dewar K."/>
            <person name="Dunn P."/>
            <person name="Etgu P."/>
            <person name="Feldblyum T.V."/>
            <person name="Feng J.-D."/>
            <person name="Fong B."/>
            <person name="Fujii C.Y."/>
            <person name="Gill J.E."/>
            <person name="Goldsmith A.D."/>
            <person name="Haas B."/>
            <person name="Hansen N.F."/>
            <person name="Hughes B."/>
            <person name="Huizar L."/>
            <person name="Hunter J.L."/>
            <person name="Jenkins J."/>
            <person name="Johnson-Hopson C."/>
            <person name="Khan S."/>
            <person name="Khaykin E."/>
            <person name="Kim C.J."/>
            <person name="Koo H.L."/>
            <person name="Kremenetskaia I."/>
            <person name="Kurtz D.B."/>
            <person name="Kwan A."/>
            <person name="Lam B."/>
            <person name="Langin-Hooper S."/>
            <person name="Lee A."/>
            <person name="Lee J.M."/>
            <person name="Lenz C.A."/>
            <person name="Li J.H."/>
            <person name="Li Y.-P."/>
            <person name="Lin X."/>
            <person name="Liu S.X."/>
            <person name="Liu Z.A."/>
            <person name="Luros J.S."/>
            <person name="Maiti R."/>
            <person name="Marziali A."/>
            <person name="Militscher J."/>
            <person name="Miranda M."/>
            <person name="Nguyen M."/>
            <person name="Nierman W.C."/>
            <person name="Osborne B.I."/>
            <person name="Pai G."/>
            <person name="Peterson J."/>
            <person name="Pham P.K."/>
            <person name="Rizzo M."/>
            <person name="Rooney T."/>
            <person name="Rowley D."/>
            <person name="Sakano H."/>
            <person name="Salzberg S.L."/>
            <person name="Schwartz J.R."/>
            <person name="Shinn P."/>
            <person name="Southwick A.M."/>
            <person name="Sun H."/>
            <person name="Tallon L.J."/>
            <person name="Tambunga G."/>
            <person name="Toriumi M.J."/>
            <person name="Town C.D."/>
            <person name="Utterback T."/>
            <person name="Van Aken S."/>
            <person name="Vaysberg M."/>
            <person name="Vysotskaia V.S."/>
            <person name="Walker M."/>
            <person name="Wu D."/>
            <person name="Yu G."/>
            <person name="Fraser C.M."/>
            <person name="Venter J.C."/>
            <person name="Davis R.W."/>
        </authorList>
    </citation>
    <scope>NUCLEOTIDE SEQUENCE [LARGE SCALE GENOMIC DNA]</scope>
    <source>
        <strain>cv. Columbia</strain>
    </source>
</reference>
<reference key="2">
    <citation type="journal article" date="2017" name="Plant J.">
        <title>Araport11: a complete reannotation of the Arabidopsis thaliana reference genome.</title>
        <authorList>
            <person name="Cheng C.Y."/>
            <person name="Krishnakumar V."/>
            <person name="Chan A.P."/>
            <person name="Thibaud-Nissen F."/>
            <person name="Schobel S."/>
            <person name="Town C.D."/>
        </authorList>
    </citation>
    <scope>GENOME REANNOTATION</scope>
    <source>
        <strain>cv. Columbia</strain>
    </source>
</reference>
<reference key="3">
    <citation type="journal article" date="2002" name="Trends Plant Sci.">
        <title>The Dof family of plant transcription factors.</title>
        <authorList>
            <person name="Yanagisawa S."/>
        </authorList>
    </citation>
    <scope>GENE FAMILY</scope>
    <scope>NOMENCLATURE</scope>
</reference>
<feature type="chain" id="PRO_0000074265" description="Dof zinc finger protein DOF1.3">
    <location>
        <begin position="1"/>
        <end position="366"/>
    </location>
</feature>
<feature type="zinc finger region" description="Dof-type" evidence="2">
    <location>
        <begin position="105"/>
        <end position="159"/>
    </location>
</feature>
<feature type="region of interest" description="Disordered" evidence="3">
    <location>
        <begin position="22"/>
        <end position="103"/>
    </location>
</feature>
<feature type="compositionally biased region" description="Low complexity" evidence="3">
    <location>
        <begin position="25"/>
        <end position="45"/>
    </location>
</feature>
<feature type="compositionally biased region" description="Low complexity" evidence="3">
    <location>
        <begin position="56"/>
        <end position="69"/>
    </location>
</feature>
<feature type="compositionally biased region" description="Basic and acidic residues" evidence="3">
    <location>
        <begin position="70"/>
        <end position="83"/>
    </location>
</feature>
<feature type="compositionally biased region" description="Basic and acidic residues" evidence="3">
    <location>
        <begin position="91"/>
        <end position="103"/>
    </location>
</feature>
<feature type="binding site" evidence="2">
    <location>
        <position position="107"/>
    </location>
    <ligand>
        <name>Zn(2+)</name>
        <dbReference type="ChEBI" id="CHEBI:29105"/>
    </ligand>
</feature>
<feature type="binding site" evidence="2">
    <location>
        <position position="110"/>
    </location>
    <ligand>
        <name>Zn(2+)</name>
        <dbReference type="ChEBI" id="CHEBI:29105"/>
    </ligand>
</feature>
<feature type="binding site" evidence="2">
    <location>
        <position position="132"/>
    </location>
    <ligand>
        <name>Zn(2+)</name>
        <dbReference type="ChEBI" id="CHEBI:29105"/>
    </ligand>
</feature>
<feature type="binding site" evidence="2">
    <location>
        <position position="135"/>
    </location>
    <ligand>
        <name>Zn(2+)</name>
        <dbReference type="ChEBI" id="CHEBI:29105"/>
    </ligand>
</feature>
<accession>Q9LQX4</accession>
<accession>F4HPC7</accession>
<proteinExistence type="inferred from homology"/>